<evidence type="ECO:0000255" key="1">
    <source>
        <dbReference type="HAMAP-Rule" id="MF_00806"/>
    </source>
</evidence>
<dbReference type="EMBL" id="CP001657">
    <property type="protein sequence ID" value="ACT14104.1"/>
    <property type="molecule type" value="Genomic_DNA"/>
</dbReference>
<dbReference type="RefSeq" id="WP_015841252.1">
    <property type="nucleotide sequence ID" value="NC_012917.1"/>
</dbReference>
<dbReference type="SMR" id="C6DC10"/>
<dbReference type="STRING" id="561230.PC1_3081"/>
<dbReference type="GeneID" id="67793083"/>
<dbReference type="KEGG" id="pct:PC1_3081"/>
<dbReference type="eggNOG" id="COG3445">
    <property type="taxonomic scope" value="Bacteria"/>
</dbReference>
<dbReference type="HOGENOM" id="CLU_133780_0_0_6"/>
<dbReference type="OrthoDB" id="9803969at2"/>
<dbReference type="Proteomes" id="UP000002736">
    <property type="component" value="Chromosome"/>
</dbReference>
<dbReference type="GO" id="GO:0005829">
    <property type="term" value="C:cytosol"/>
    <property type="evidence" value="ECO:0007669"/>
    <property type="project" value="TreeGrafter"/>
</dbReference>
<dbReference type="GO" id="GO:0008861">
    <property type="term" value="F:formate C-acetyltransferase activity"/>
    <property type="evidence" value="ECO:0007669"/>
    <property type="project" value="TreeGrafter"/>
</dbReference>
<dbReference type="FunFam" id="3.20.70.20:FF:000002">
    <property type="entry name" value="Autonomous glycyl radical cofactor"/>
    <property type="match status" value="1"/>
</dbReference>
<dbReference type="Gene3D" id="3.20.70.20">
    <property type="match status" value="1"/>
</dbReference>
<dbReference type="HAMAP" id="MF_00806">
    <property type="entry name" value="GrcA"/>
    <property type="match status" value="1"/>
</dbReference>
<dbReference type="InterPro" id="IPR050244">
    <property type="entry name" value="Auton_GlycylRad_Cofactor"/>
</dbReference>
<dbReference type="InterPro" id="IPR019777">
    <property type="entry name" value="Form_AcTrfase_GR_CS"/>
</dbReference>
<dbReference type="InterPro" id="IPR001150">
    <property type="entry name" value="Gly_radical"/>
</dbReference>
<dbReference type="InterPro" id="IPR011140">
    <property type="entry name" value="Glycyl_radical_cofactor_GrcA"/>
</dbReference>
<dbReference type="NCBIfam" id="TIGR04365">
    <property type="entry name" value="spare_glycyl"/>
    <property type="match status" value="1"/>
</dbReference>
<dbReference type="PANTHER" id="PTHR30191">
    <property type="entry name" value="FORMATE ACETYLTRANSFERASE"/>
    <property type="match status" value="1"/>
</dbReference>
<dbReference type="PANTHER" id="PTHR30191:SF0">
    <property type="entry name" value="FORMATE ACETYLTRANSFERASE 1"/>
    <property type="match status" value="1"/>
</dbReference>
<dbReference type="Pfam" id="PF01228">
    <property type="entry name" value="Gly_radical"/>
    <property type="match status" value="1"/>
</dbReference>
<dbReference type="PIRSF" id="PIRSF000378">
    <property type="entry name" value="Gly_radicl_yfiD"/>
    <property type="match status" value="1"/>
</dbReference>
<dbReference type="SUPFAM" id="SSF51998">
    <property type="entry name" value="PFL-like glycyl radical enzymes"/>
    <property type="match status" value="1"/>
</dbReference>
<dbReference type="PROSITE" id="PS00850">
    <property type="entry name" value="GLY_RADICAL_1"/>
    <property type="match status" value="1"/>
</dbReference>
<dbReference type="PROSITE" id="PS51149">
    <property type="entry name" value="GLY_RADICAL_2"/>
    <property type="match status" value="1"/>
</dbReference>
<organism>
    <name type="scientific">Pectobacterium carotovorum subsp. carotovorum (strain PC1)</name>
    <dbReference type="NCBI Taxonomy" id="561230"/>
    <lineage>
        <taxon>Bacteria</taxon>
        <taxon>Pseudomonadati</taxon>
        <taxon>Pseudomonadota</taxon>
        <taxon>Gammaproteobacteria</taxon>
        <taxon>Enterobacterales</taxon>
        <taxon>Pectobacteriaceae</taxon>
        <taxon>Pectobacterium</taxon>
    </lineage>
</organism>
<reference key="1">
    <citation type="submission" date="2009-07" db="EMBL/GenBank/DDBJ databases">
        <title>Complete sequence of Pectobacterium carotovorum subsp. carotovorum PC1.</title>
        <authorList>
            <consortium name="US DOE Joint Genome Institute"/>
            <person name="Lucas S."/>
            <person name="Copeland A."/>
            <person name="Lapidus A."/>
            <person name="Glavina del Rio T."/>
            <person name="Tice H."/>
            <person name="Bruce D."/>
            <person name="Goodwin L."/>
            <person name="Pitluck S."/>
            <person name="Munk A.C."/>
            <person name="Brettin T."/>
            <person name="Detter J.C."/>
            <person name="Han C."/>
            <person name="Tapia R."/>
            <person name="Larimer F."/>
            <person name="Land M."/>
            <person name="Hauser L."/>
            <person name="Kyrpides N."/>
            <person name="Mikhailova N."/>
            <person name="Balakrishnan V."/>
            <person name="Glasner J."/>
            <person name="Perna N.T."/>
        </authorList>
    </citation>
    <scope>NUCLEOTIDE SEQUENCE [LARGE SCALE GENOMIC DNA]</scope>
    <source>
        <strain>PC1</strain>
    </source>
</reference>
<feature type="chain" id="PRO_1000213007" description="Autonomous glycyl radical cofactor">
    <location>
        <begin position="1"/>
        <end position="127"/>
    </location>
</feature>
<feature type="domain" description="Glycine radical" evidence="1">
    <location>
        <begin position="5"/>
        <end position="127"/>
    </location>
</feature>
<feature type="modified residue" description="Glycine radical" evidence="1">
    <location>
        <position position="102"/>
    </location>
</feature>
<protein>
    <recommendedName>
        <fullName evidence="1">Autonomous glycyl radical cofactor</fullName>
    </recommendedName>
</protein>
<name>GRCA_PECCP</name>
<gene>
    <name evidence="1" type="primary">grcA</name>
    <name type="ordered locus">PC1_3081</name>
</gene>
<proteinExistence type="inferred from homology"/>
<sequence>MVTGIQITKANDSALINSFWLLDEEKSQARCVCAKSVYSEDQIVPVSDLGQIEYREIPLEIKPEVRVEGGQHLNVNVLRRETLEDAVKHPEKYPQLTIRVSGYAVRFNSLTPEQQRDVIARTFTESL</sequence>
<comment type="function">
    <text evidence="1">Acts as a radical domain for damaged PFL and possibly other radical proteins.</text>
</comment>
<keyword id="KW-0556">Organic radical</keyword>
<accession>C6DC10</accession>